<comment type="function">
    <text evidence="1">Catalyzes the complicated ring closure reaction between the two acyclic compounds 1-deoxy-D-xylulose-5-phosphate (DXP) and 3-amino-2-oxopropyl phosphate (1-amino-acetone-3-phosphate or AAP) to form pyridoxine 5'-phosphate (PNP) and inorganic phosphate.</text>
</comment>
<comment type="catalytic activity">
    <reaction evidence="1">
        <text>3-amino-2-oxopropyl phosphate + 1-deoxy-D-xylulose 5-phosphate = pyridoxine 5'-phosphate + phosphate + 2 H2O + H(+)</text>
        <dbReference type="Rhea" id="RHEA:15265"/>
        <dbReference type="ChEBI" id="CHEBI:15377"/>
        <dbReference type="ChEBI" id="CHEBI:15378"/>
        <dbReference type="ChEBI" id="CHEBI:43474"/>
        <dbReference type="ChEBI" id="CHEBI:57279"/>
        <dbReference type="ChEBI" id="CHEBI:57792"/>
        <dbReference type="ChEBI" id="CHEBI:58589"/>
        <dbReference type="EC" id="2.6.99.2"/>
    </reaction>
</comment>
<comment type="pathway">
    <text evidence="1">Cofactor biosynthesis; pyridoxine 5'-phosphate biosynthesis; pyridoxine 5'-phosphate from D-erythrose 4-phosphate: step 5/5.</text>
</comment>
<comment type="subunit">
    <text evidence="1">Homooctamer; tetramer of dimers.</text>
</comment>
<comment type="subcellular location">
    <subcellularLocation>
        <location evidence="1">Cytoplasm</location>
    </subcellularLocation>
</comment>
<comment type="similarity">
    <text evidence="1">Belongs to the PNP synthase family.</text>
</comment>
<feature type="chain" id="PRO_1000022361" description="Pyridoxine 5'-phosphate synthase">
    <location>
        <begin position="1"/>
        <end position="238"/>
    </location>
</feature>
<feature type="active site" description="Proton acceptor" evidence="1">
    <location>
        <position position="43"/>
    </location>
</feature>
<feature type="active site" description="Proton acceptor" evidence="1">
    <location>
        <position position="70"/>
    </location>
</feature>
<feature type="active site" description="Proton donor" evidence="1">
    <location>
        <position position="190"/>
    </location>
</feature>
<feature type="binding site" evidence="1">
    <location>
        <position position="7"/>
    </location>
    <ligand>
        <name>3-amino-2-oxopropyl phosphate</name>
        <dbReference type="ChEBI" id="CHEBI:57279"/>
    </ligand>
</feature>
<feature type="binding site" evidence="1">
    <location>
        <position position="18"/>
    </location>
    <ligand>
        <name>3-amino-2-oxopropyl phosphate</name>
        <dbReference type="ChEBI" id="CHEBI:57279"/>
    </ligand>
</feature>
<feature type="binding site" evidence="1">
    <location>
        <position position="45"/>
    </location>
    <ligand>
        <name>1-deoxy-D-xylulose 5-phosphate</name>
        <dbReference type="ChEBI" id="CHEBI:57792"/>
    </ligand>
</feature>
<feature type="binding site" evidence="1">
    <location>
        <position position="50"/>
    </location>
    <ligand>
        <name>1-deoxy-D-xylulose 5-phosphate</name>
        <dbReference type="ChEBI" id="CHEBI:57792"/>
    </ligand>
</feature>
<feature type="binding site" evidence="1">
    <location>
        <position position="100"/>
    </location>
    <ligand>
        <name>1-deoxy-D-xylulose 5-phosphate</name>
        <dbReference type="ChEBI" id="CHEBI:57792"/>
    </ligand>
</feature>
<feature type="binding site" evidence="1">
    <location>
        <position position="191"/>
    </location>
    <ligand>
        <name>3-amino-2-oxopropyl phosphate</name>
        <dbReference type="ChEBI" id="CHEBI:57279"/>
    </ligand>
</feature>
<feature type="binding site" evidence="1">
    <location>
        <begin position="213"/>
        <end position="214"/>
    </location>
    <ligand>
        <name>3-amino-2-oxopropyl phosphate</name>
        <dbReference type="ChEBI" id="CHEBI:57279"/>
    </ligand>
</feature>
<feature type="site" description="Transition state stabilizer" evidence="1">
    <location>
        <position position="151"/>
    </location>
</feature>
<sequence length="238" mass="26432">MTKLSVNINKVATLRNARGGNNPDVVKVALDCEAFGAEGITVHPRPDERHIRRSDVYELRPLLTTEFNIEGYPSPEFVDLVLKVKPHQVTLVPDAPDQITSNAGWDTKTNLSFLTELMDTFGQAGIRTSIFVGTDKEMIEYAAKAGADRVELYTEPYATMYPRNPEAAIAPFIEAAKVTRSLGMGLNAGHDLSLVNLKYMHTHIPWLDEVSIGHALISDALYMGLKQTIEEYKNCLRS</sequence>
<protein>
    <recommendedName>
        <fullName evidence="1">Pyridoxine 5'-phosphate synthase</fullName>
        <shortName evidence="1">PNP synthase</shortName>
        <ecNumber evidence="1">2.6.99.2</ecNumber>
    </recommendedName>
</protein>
<keyword id="KW-0963">Cytoplasm</keyword>
<keyword id="KW-0664">Pyridoxine biosynthesis</keyword>
<keyword id="KW-0808">Transferase</keyword>
<organism>
    <name type="scientific">Phocaeicola vulgatus (strain ATCC 8482 / DSM 1447 / JCM 5826 / CCUG 4940 / NBRC 14291 / NCTC 11154)</name>
    <name type="common">Bacteroides vulgatus</name>
    <dbReference type="NCBI Taxonomy" id="435590"/>
    <lineage>
        <taxon>Bacteria</taxon>
        <taxon>Pseudomonadati</taxon>
        <taxon>Bacteroidota</taxon>
        <taxon>Bacteroidia</taxon>
        <taxon>Bacteroidales</taxon>
        <taxon>Bacteroidaceae</taxon>
        <taxon>Phocaeicola</taxon>
    </lineage>
</organism>
<accession>A6KXM3</accession>
<evidence type="ECO:0000255" key="1">
    <source>
        <dbReference type="HAMAP-Rule" id="MF_00279"/>
    </source>
</evidence>
<name>PDXJ_PHOV8</name>
<gene>
    <name evidence="1" type="primary">pdxJ</name>
    <name type="ordered locus">BVU_0477</name>
</gene>
<proteinExistence type="inferred from homology"/>
<dbReference type="EC" id="2.6.99.2" evidence="1"/>
<dbReference type="EMBL" id="CP000139">
    <property type="protein sequence ID" value="ABR38187.1"/>
    <property type="molecule type" value="Genomic_DNA"/>
</dbReference>
<dbReference type="RefSeq" id="WP_005840777.1">
    <property type="nucleotide sequence ID" value="NZ_JANSWM010000025.1"/>
</dbReference>
<dbReference type="SMR" id="A6KXM3"/>
<dbReference type="STRING" id="435590.BVU_0477"/>
<dbReference type="PaxDb" id="435590-BVU_0477"/>
<dbReference type="GeneID" id="5301446"/>
<dbReference type="KEGG" id="bvu:BVU_0477"/>
<dbReference type="eggNOG" id="COG0854">
    <property type="taxonomic scope" value="Bacteria"/>
</dbReference>
<dbReference type="HOGENOM" id="CLU_074563_1_0_10"/>
<dbReference type="BioCyc" id="BVUL435590:G1G59-503-MONOMER"/>
<dbReference type="UniPathway" id="UPA00244">
    <property type="reaction ID" value="UER00313"/>
</dbReference>
<dbReference type="Proteomes" id="UP000002861">
    <property type="component" value="Chromosome"/>
</dbReference>
<dbReference type="GO" id="GO:0005829">
    <property type="term" value="C:cytosol"/>
    <property type="evidence" value="ECO:0007669"/>
    <property type="project" value="TreeGrafter"/>
</dbReference>
<dbReference type="GO" id="GO:0033856">
    <property type="term" value="F:pyridoxine 5'-phosphate synthase activity"/>
    <property type="evidence" value="ECO:0007669"/>
    <property type="project" value="UniProtKB-EC"/>
</dbReference>
<dbReference type="GO" id="GO:0008615">
    <property type="term" value="P:pyridoxine biosynthetic process"/>
    <property type="evidence" value="ECO:0007669"/>
    <property type="project" value="UniProtKB-UniRule"/>
</dbReference>
<dbReference type="CDD" id="cd00003">
    <property type="entry name" value="PNPsynthase"/>
    <property type="match status" value="1"/>
</dbReference>
<dbReference type="FunFam" id="3.20.20.70:FF:000150">
    <property type="entry name" value="Pyridoxine 5'-phosphate synthase"/>
    <property type="match status" value="1"/>
</dbReference>
<dbReference type="Gene3D" id="3.20.20.70">
    <property type="entry name" value="Aldolase class I"/>
    <property type="match status" value="1"/>
</dbReference>
<dbReference type="HAMAP" id="MF_00279">
    <property type="entry name" value="PdxJ"/>
    <property type="match status" value="1"/>
</dbReference>
<dbReference type="InterPro" id="IPR013785">
    <property type="entry name" value="Aldolase_TIM"/>
</dbReference>
<dbReference type="InterPro" id="IPR004569">
    <property type="entry name" value="PyrdxlP_synth_PdxJ"/>
</dbReference>
<dbReference type="InterPro" id="IPR036130">
    <property type="entry name" value="Pyridoxine-5'_phos_synth"/>
</dbReference>
<dbReference type="NCBIfam" id="TIGR00559">
    <property type="entry name" value="pdxJ"/>
    <property type="match status" value="1"/>
</dbReference>
<dbReference type="NCBIfam" id="NF003625">
    <property type="entry name" value="PRK05265.1-3"/>
    <property type="match status" value="1"/>
</dbReference>
<dbReference type="NCBIfam" id="NF003626">
    <property type="entry name" value="PRK05265.1-4"/>
    <property type="match status" value="1"/>
</dbReference>
<dbReference type="PANTHER" id="PTHR30456">
    <property type="entry name" value="PYRIDOXINE 5'-PHOSPHATE SYNTHASE"/>
    <property type="match status" value="1"/>
</dbReference>
<dbReference type="PANTHER" id="PTHR30456:SF0">
    <property type="entry name" value="PYRIDOXINE 5'-PHOSPHATE SYNTHASE"/>
    <property type="match status" value="1"/>
</dbReference>
<dbReference type="Pfam" id="PF03740">
    <property type="entry name" value="PdxJ"/>
    <property type="match status" value="1"/>
</dbReference>
<dbReference type="SUPFAM" id="SSF63892">
    <property type="entry name" value="Pyridoxine 5'-phosphate synthase"/>
    <property type="match status" value="1"/>
</dbReference>
<reference key="1">
    <citation type="journal article" date="2007" name="PLoS Biol.">
        <title>Evolution of symbiotic bacteria in the distal human intestine.</title>
        <authorList>
            <person name="Xu J."/>
            <person name="Mahowald M.A."/>
            <person name="Ley R.E."/>
            <person name="Lozupone C.A."/>
            <person name="Hamady M."/>
            <person name="Martens E.C."/>
            <person name="Henrissat B."/>
            <person name="Coutinho P.M."/>
            <person name="Minx P."/>
            <person name="Latreille P."/>
            <person name="Cordum H."/>
            <person name="Van Brunt A."/>
            <person name="Kim K."/>
            <person name="Fulton R.S."/>
            <person name="Fulton L.A."/>
            <person name="Clifton S.W."/>
            <person name="Wilson R.K."/>
            <person name="Knight R.D."/>
            <person name="Gordon J.I."/>
        </authorList>
    </citation>
    <scope>NUCLEOTIDE SEQUENCE [LARGE SCALE GENOMIC DNA]</scope>
    <source>
        <strain>ATCC 8482 / DSM 1447 / JCM 5826 / CCUG 4940 / NBRC 14291 / NCTC 11154</strain>
    </source>
</reference>